<dbReference type="EMBL" id="AB053483">
    <property type="protein sequence ID" value="BAB20909.1"/>
    <property type="molecule type" value="mRNA"/>
</dbReference>
<dbReference type="RefSeq" id="NP_999237.1">
    <property type="nucleotide sequence ID" value="NM_214072.1"/>
</dbReference>
<dbReference type="RefSeq" id="XP_005654486.1">
    <property type="nucleotide sequence ID" value="XM_005654429.3"/>
</dbReference>
<dbReference type="RefSeq" id="XP_013840780.1">
    <property type="nucleotide sequence ID" value="XM_013985326.2"/>
</dbReference>
<dbReference type="RefSeq" id="XP_020938425.1">
    <property type="nucleotide sequence ID" value="XM_021082766.1"/>
</dbReference>
<dbReference type="SMR" id="Q9GKQ9"/>
<dbReference type="FunCoup" id="Q9GKQ9">
    <property type="interactions" value="2810"/>
</dbReference>
<dbReference type="STRING" id="9823.ENSSSCP00000004879"/>
<dbReference type="PaxDb" id="9823-ENSSSCP00000004879"/>
<dbReference type="PeptideAtlas" id="Q9GKQ9"/>
<dbReference type="Ensembl" id="ENSSSCT00000004997.3">
    <property type="protein sequence ID" value="ENSSSCP00000004879.1"/>
    <property type="gene ID" value="ENSSSCG00000004524.5"/>
</dbReference>
<dbReference type="Ensembl" id="ENSSSCT00015025353.1">
    <property type="protein sequence ID" value="ENSSSCP00015009898.1"/>
    <property type="gene ID" value="ENSSSCG00015019009.1"/>
</dbReference>
<dbReference type="Ensembl" id="ENSSSCT00025051229.1">
    <property type="protein sequence ID" value="ENSSSCP00025021863.1"/>
    <property type="gene ID" value="ENSSSCG00025037625.1"/>
</dbReference>
<dbReference type="Ensembl" id="ENSSSCT00030080575.1">
    <property type="protein sequence ID" value="ENSSSCP00030036931.1"/>
    <property type="gene ID" value="ENSSSCG00030057715.1"/>
</dbReference>
<dbReference type="Ensembl" id="ENSSSCT00035082257.1">
    <property type="protein sequence ID" value="ENSSSCP00035034107.1"/>
    <property type="gene ID" value="ENSSSCG00035061214.1"/>
</dbReference>
<dbReference type="Ensembl" id="ENSSSCT00040069956.1">
    <property type="protein sequence ID" value="ENSSSCP00040029823.1"/>
    <property type="gene ID" value="ENSSSCG00040050916.1"/>
</dbReference>
<dbReference type="Ensembl" id="ENSSSCT00040070046.1">
    <property type="protein sequence ID" value="ENSSSCP00040029859.1"/>
    <property type="gene ID" value="ENSSSCG00040050916.1"/>
</dbReference>
<dbReference type="Ensembl" id="ENSSSCT00045037724.1">
    <property type="protein sequence ID" value="ENSSSCP00045026219.1"/>
    <property type="gene ID" value="ENSSSCG00045022054.1"/>
</dbReference>
<dbReference type="Ensembl" id="ENSSSCT00050088108.1">
    <property type="protein sequence ID" value="ENSSSCP00050037783.1"/>
    <property type="gene ID" value="ENSSSCG00050064683.1"/>
</dbReference>
<dbReference type="Ensembl" id="ENSSSCT00055010846.1">
    <property type="protein sequence ID" value="ENSSSCP00055008581.1"/>
    <property type="gene ID" value="ENSSSCG00055005534.1"/>
</dbReference>
<dbReference type="Ensembl" id="ENSSSCT00060051837.1">
    <property type="protein sequence ID" value="ENSSSCP00060022059.1"/>
    <property type="gene ID" value="ENSSSCG00060038335.1"/>
</dbReference>
<dbReference type="Ensembl" id="ENSSSCT00065065919.1">
    <property type="protein sequence ID" value="ENSSSCP00065028560.1"/>
    <property type="gene ID" value="ENSSSCG00065048170.1"/>
</dbReference>
<dbReference type="Ensembl" id="ENSSSCT00070033293.1">
    <property type="protein sequence ID" value="ENSSSCP00070027806.1"/>
    <property type="gene ID" value="ENSSSCG00070016851.1"/>
</dbReference>
<dbReference type="Ensembl" id="ENSSSCT00070033301.1">
    <property type="protein sequence ID" value="ENSSSCP00070027813.1"/>
    <property type="gene ID" value="ENSSSCG00070016851.1"/>
</dbReference>
<dbReference type="Ensembl" id="ENSSSCT00105065321">
    <property type="protein sequence ID" value="ENSSSCP00105046554"/>
    <property type="gene ID" value="ENSSSCG00105034215"/>
</dbReference>
<dbReference type="Ensembl" id="ENSSSCT00110029871">
    <property type="protein sequence ID" value="ENSSSCP00110020168"/>
    <property type="gene ID" value="ENSSSCG00110015683"/>
</dbReference>
<dbReference type="Ensembl" id="ENSSSCT00115030120">
    <property type="protein sequence ID" value="ENSSSCP00115028621"/>
    <property type="gene ID" value="ENSSSCG00115017115"/>
</dbReference>
<dbReference type="Ensembl" id="ENSSSCT00130060449">
    <property type="protein sequence ID" value="ENSSSCP00130043370"/>
    <property type="gene ID" value="ENSSSCG00130030921"/>
</dbReference>
<dbReference type="GeneID" id="397142"/>
<dbReference type="KEGG" id="ssc:397142"/>
<dbReference type="CTD" id="4089"/>
<dbReference type="VGNC" id="VGNC:93218">
    <property type="gene designation" value="SMAD4"/>
</dbReference>
<dbReference type="eggNOG" id="KOG3701">
    <property type="taxonomic scope" value="Eukaryota"/>
</dbReference>
<dbReference type="GeneTree" id="ENSGT00940000157435"/>
<dbReference type="HOGENOM" id="CLU_026736_1_1_1"/>
<dbReference type="InParanoid" id="Q9GKQ9"/>
<dbReference type="OrthoDB" id="5875866at2759"/>
<dbReference type="TreeFam" id="TF314923"/>
<dbReference type="Reactome" id="R-SSC-1181150">
    <property type="pathway name" value="Signaling by NODAL"/>
</dbReference>
<dbReference type="Reactome" id="R-SSC-1502540">
    <property type="pathway name" value="Signaling by Activin"/>
</dbReference>
<dbReference type="Reactome" id="R-SSC-201451">
    <property type="pathway name" value="Signaling by BMP"/>
</dbReference>
<dbReference type="Reactome" id="R-SSC-2173789">
    <property type="pathway name" value="TGF-beta receptor signaling activates SMADs"/>
</dbReference>
<dbReference type="Reactome" id="R-SSC-2173795">
    <property type="pathway name" value="Downregulation of SMAD2/3:SMAD4 transcriptional activity"/>
</dbReference>
<dbReference type="Reactome" id="R-SSC-2173796">
    <property type="pathway name" value="SMAD2/SMAD3:SMAD4 heterotrimer regulates transcription"/>
</dbReference>
<dbReference type="Reactome" id="R-SSC-5689880">
    <property type="pathway name" value="Ub-specific processing proteases"/>
</dbReference>
<dbReference type="Reactome" id="R-SSC-8941326">
    <property type="pathway name" value="RUNX2 regulates bone development"/>
</dbReference>
<dbReference type="Reactome" id="R-SSC-8941855">
    <property type="pathway name" value="RUNX3 regulates CDKN1A transcription"/>
</dbReference>
<dbReference type="Reactome" id="R-SSC-9617828">
    <property type="pathway name" value="FOXO-mediated transcription of cell cycle genes"/>
</dbReference>
<dbReference type="Proteomes" id="UP000008227">
    <property type="component" value="Chromosome 1"/>
</dbReference>
<dbReference type="Proteomes" id="UP000314985">
    <property type="component" value="Chromosome 1"/>
</dbReference>
<dbReference type="Proteomes" id="UP000694570">
    <property type="component" value="Unplaced"/>
</dbReference>
<dbReference type="Proteomes" id="UP000694571">
    <property type="component" value="Unplaced"/>
</dbReference>
<dbReference type="Proteomes" id="UP000694720">
    <property type="component" value="Unplaced"/>
</dbReference>
<dbReference type="Proteomes" id="UP000694722">
    <property type="component" value="Unplaced"/>
</dbReference>
<dbReference type="Proteomes" id="UP000694723">
    <property type="component" value="Unplaced"/>
</dbReference>
<dbReference type="Proteomes" id="UP000694724">
    <property type="component" value="Unplaced"/>
</dbReference>
<dbReference type="Proteomes" id="UP000694725">
    <property type="component" value="Unplaced"/>
</dbReference>
<dbReference type="Proteomes" id="UP000694726">
    <property type="component" value="Unplaced"/>
</dbReference>
<dbReference type="Proteomes" id="UP000694727">
    <property type="component" value="Unplaced"/>
</dbReference>
<dbReference type="Proteomes" id="UP000694728">
    <property type="component" value="Unplaced"/>
</dbReference>
<dbReference type="Bgee" id="ENSSSCG00000004524">
    <property type="expression patterns" value="Expressed in granulosa cell and 43 other cell types or tissues"/>
</dbReference>
<dbReference type="ExpressionAtlas" id="Q9GKQ9">
    <property type="expression patterns" value="baseline and differential"/>
</dbReference>
<dbReference type="GO" id="GO:0032444">
    <property type="term" value="C:activin responsive factor complex"/>
    <property type="evidence" value="ECO:0007669"/>
    <property type="project" value="Ensembl"/>
</dbReference>
<dbReference type="GO" id="GO:0005813">
    <property type="term" value="C:centrosome"/>
    <property type="evidence" value="ECO:0007669"/>
    <property type="project" value="Ensembl"/>
</dbReference>
<dbReference type="GO" id="GO:0000785">
    <property type="term" value="C:chromatin"/>
    <property type="evidence" value="ECO:0007669"/>
    <property type="project" value="Ensembl"/>
</dbReference>
<dbReference type="GO" id="GO:0036064">
    <property type="term" value="C:ciliary basal body"/>
    <property type="evidence" value="ECO:0007669"/>
    <property type="project" value="Ensembl"/>
</dbReference>
<dbReference type="GO" id="GO:0005829">
    <property type="term" value="C:cytosol"/>
    <property type="evidence" value="ECO:0007669"/>
    <property type="project" value="Ensembl"/>
</dbReference>
<dbReference type="GO" id="GO:0071144">
    <property type="term" value="C:heteromeric SMAD protein complex"/>
    <property type="evidence" value="ECO:0000318"/>
    <property type="project" value="GO_Central"/>
</dbReference>
<dbReference type="GO" id="GO:0005654">
    <property type="term" value="C:nucleoplasm"/>
    <property type="evidence" value="ECO:0007669"/>
    <property type="project" value="Ensembl"/>
</dbReference>
<dbReference type="GO" id="GO:0003682">
    <property type="term" value="F:chromatin binding"/>
    <property type="evidence" value="ECO:0007669"/>
    <property type="project" value="Ensembl"/>
</dbReference>
<dbReference type="GO" id="GO:0005518">
    <property type="term" value="F:collagen binding"/>
    <property type="evidence" value="ECO:0007669"/>
    <property type="project" value="Ensembl"/>
</dbReference>
<dbReference type="GO" id="GO:0001228">
    <property type="term" value="F:DNA-binding transcription activator activity, RNA polymerase II-specific"/>
    <property type="evidence" value="ECO:0007669"/>
    <property type="project" value="Ensembl"/>
</dbReference>
<dbReference type="GO" id="GO:0000981">
    <property type="term" value="F:DNA-binding transcription factor activity, RNA polymerase II-specific"/>
    <property type="evidence" value="ECO:0000318"/>
    <property type="project" value="GO_Central"/>
</dbReference>
<dbReference type="GO" id="GO:0070411">
    <property type="term" value="F:I-SMAD binding"/>
    <property type="evidence" value="ECO:0000318"/>
    <property type="project" value="GO_Central"/>
</dbReference>
<dbReference type="GO" id="GO:0046872">
    <property type="term" value="F:metal ion binding"/>
    <property type="evidence" value="ECO:0007669"/>
    <property type="project" value="UniProtKB-KW"/>
</dbReference>
<dbReference type="GO" id="GO:0042803">
    <property type="term" value="F:protein homodimerization activity"/>
    <property type="evidence" value="ECO:0007669"/>
    <property type="project" value="Ensembl"/>
</dbReference>
<dbReference type="GO" id="GO:0070412">
    <property type="term" value="F:R-SMAD binding"/>
    <property type="evidence" value="ECO:0007669"/>
    <property type="project" value="Ensembl"/>
</dbReference>
<dbReference type="GO" id="GO:0000978">
    <property type="term" value="F:RNA polymerase II cis-regulatory region sequence-specific DNA binding"/>
    <property type="evidence" value="ECO:0000318"/>
    <property type="project" value="GO_Central"/>
</dbReference>
<dbReference type="GO" id="GO:0061629">
    <property type="term" value="F:RNA polymerase II-specific DNA-binding transcription factor binding"/>
    <property type="evidence" value="ECO:0007669"/>
    <property type="project" value="Ensembl"/>
</dbReference>
<dbReference type="GO" id="GO:0043199">
    <property type="term" value="F:sulfate binding"/>
    <property type="evidence" value="ECO:0007669"/>
    <property type="project" value="Ensembl"/>
</dbReference>
<dbReference type="GO" id="GO:0001223">
    <property type="term" value="F:transcription coactivator binding"/>
    <property type="evidence" value="ECO:0007669"/>
    <property type="project" value="Ensembl"/>
</dbReference>
<dbReference type="GO" id="GO:0001222">
    <property type="term" value="F:transcription corepressor binding"/>
    <property type="evidence" value="ECO:0007669"/>
    <property type="project" value="Ensembl"/>
</dbReference>
<dbReference type="GO" id="GO:0009653">
    <property type="term" value="P:anatomical structure morphogenesis"/>
    <property type="evidence" value="ECO:0000318"/>
    <property type="project" value="GO_Central"/>
</dbReference>
<dbReference type="GO" id="GO:0036302">
    <property type="term" value="P:atrioventricular canal development"/>
    <property type="evidence" value="ECO:0007669"/>
    <property type="project" value="Ensembl"/>
</dbReference>
<dbReference type="GO" id="GO:0003190">
    <property type="term" value="P:atrioventricular valve formation"/>
    <property type="evidence" value="ECO:0007669"/>
    <property type="project" value="Ensembl"/>
</dbReference>
<dbReference type="GO" id="GO:0007411">
    <property type="term" value="P:axon guidance"/>
    <property type="evidence" value="ECO:0007669"/>
    <property type="project" value="Ensembl"/>
</dbReference>
<dbReference type="GO" id="GO:0030509">
    <property type="term" value="P:BMP signaling pathway"/>
    <property type="evidence" value="ECO:0000318"/>
    <property type="project" value="GO_Central"/>
</dbReference>
<dbReference type="GO" id="GO:0003360">
    <property type="term" value="P:brainstem development"/>
    <property type="evidence" value="ECO:0007669"/>
    <property type="project" value="Ensembl"/>
</dbReference>
<dbReference type="GO" id="GO:0001658">
    <property type="term" value="P:branching involved in ureteric bud morphogenesis"/>
    <property type="evidence" value="ECO:0007669"/>
    <property type="project" value="Ensembl"/>
</dbReference>
<dbReference type="GO" id="GO:0030154">
    <property type="term" value="P:cell differentiation"/>
    <property type="evidence" value="ECO:0000318"/>
    <property type="project" value="GO_Central"/>
</dbReference>
<dbReference type="GO" id="GO:0008283">
    <property type="term" value="P:cell population proliferation"/>
    <property type="evidence" value="ECO:0007669"/>
    <property type="project" value="Ensembl"/>
</dbReference>
<dbReference type="GO" id="GO:0048589">
    <property type="term" value="P:developmental growth"/>
    <property type="evidence" value="ECO:0007669"/>
    <property type="project" value="Ensembl"/>
</dbReference>
<dbReference type="GO" id="GO:0042733">
    <property type="term" value="P:embryonic digit morphogenesis"/>
    <property type="evidence" value="ECO:0007669"/>
    <property type="project" value="Ensembl"/>
</dbReference>
<dbReference type="GO" id="GO:0060956">
    <property type="term" value="P:endocardial cell differentiation"/>
    <property type="evidence" value="ECO:0007669"/>
    <property type="project" value="Ensembl"/>
</dbReference>
<dbReference type="GO" id="GO:0042118">
    <property type="term" value="P:endothelial cell activation"/>
    <property type="evidence" value="ECO:0007669"/>
    <property type="project" value="Ensembl"/>
</dbReference>
<dbReference type="GO" id="GO:0010631">
    <property type="term" value="P:epithelial cell migration"/>
    <property type="evidence" value="ECO:0007669"/>
    <property type="project" value="Ensembl"/>
</dbReference>
<dbReference type="GO" id="GO:0003198">
    <property type="term" value="P:epithelial to mesenchymal transition involved in endocardial cushion formation"/>
    <property type="evidence" value="ECO:0007669"/>
    <property type="project" value="Ensembl"/>
</dbReference>
<dbReference type="GO" id="GO:0097191">
    <property type="term" value="P:extrinsic apoptotic signaling pathway"/>
    <property type="evidence" value="ECO:0007669"/>
    <property type="project" value="Ensembl"/>
</dbReference>
<dbReference type="GO" id="GO:0061040">
    <property type="term" value="P:female gonad morphogenesis"/>
    <property type="evidence" value="ECO:0007669"/>
    <property type="project" value="Ensembl"/>
</dbReference>
<dbReference type="GO" id="GO:0048859">
    <property type="term" value="P:formation of anatomical boundary"/>
    <property type="evidence" value="ECO:0007669"/>
    <property type="project" value="Ensembl"/>
</dbReference>
<dbReference type="GO" id="GO:0001702">
    <property type="term" value="P:gastrulation with mouth forming second"/>
    <property type="evidence" value="ECO:0007669"/>
    <property type="project" value="Ensembl"/>
</dbReference>
<dbReference type="GO" id="GO:0001701">
    <property type="term" value="P:in utero embryonic development"/>
    <property type="evidence" value="ECO:0007669"/>
    <property type="project" value="Ensembl"/>
</dbReference>
<dbReference type="GO" id="GO:0070102">
    <property type="term" value="P:interleukin-6-mediated signaling pathway"/>
    <property type="evidence" value="ECO:0007669"/>
    <property type="project" value="Ensembl"/>
</dbReference>
<dbReference type="GO" id="GO:0006879">
    <property type="term" value="P:intracellular iron ion homeostasis"/>
    <property type="evidence" value="ECO:0007669"/>
    <property type="project" value="Ensembl"/>
</dbReference>
<dbReference type="GO" id="GO:0003220">
    <property type="term" value="P:left ventricular cardiac muscle tissue morphogenesis"/>
    <property type="evidence" value="ECO:0007669"/>
    <property type="project" value="Ensembl"/>
</dbReference>
<dbReference type="GO" id="GO:0048382">
    <property type="term" value="P:mesendoderm development"/>
    <property type="evidence" value="ECO:0007669"/>
    <property type="project" value="Ensembl"/>
</dbReference>
<dbReference type="GO" id="GO:0072133">
    <property type="term" value="P:metanephric mesenchyme morphogenesis"/>
    <property type="evidence" value="ECO:0007669"/>
    <property type="project" value="Ensembl"/>
</dbReference>
<dbReference type="GO" id="GO:0090090">
    <property type="term" value="P:negative regulation of canonical Wnt signaling pathway"/>
    <property type="evidence" value="ECO:0007669"/>
    <property type="project" value="Ensembl"/>
</dbReference>
<dbReference type="GO" id="GO:0010614">
    <property type="term" value="P:negative regulation of cardiac muscle hypertrophy"/>
    <property type="evidence" value="ECO:0007669"/>
    <property type="project" value="Ensembl"/>
</dbReference>
<dbReference type="GO" id="GO:1905305">
    <property type="term" value="P:negative regulation of cardiac myofibril assembly"/>
    <property type="evidence" value="ECO:0007669"/>
    <property type="project" value="Ensembl"/>
</dbReference>
<dbReference type="GO" id="GO:0030308">
    <property type="term" value="P:negative regulation of cell growth"/>
    <property type="evidence" value="ECO:0007669"/>
    <property type="project" value="Ensembl"/>
</dbReference>
<dbReference type="GO" id="GO:0008285">
    <property type="term" value="P:negative regulation of cell population proliferation"/>
    <property type="evidence" value="ECO:0007669"/>
    <property type="project" value="Ensembl"/>
</dbReference>
<dbReference type="GO" id="GO:0070373">
    <property type="term" value="P:negative regulation of ERK1 and ERK2 cascade"/>
    <property type="evidence" value="ECO:0007669"/>
    <property type="project" value="Ensembl"/>
</dbReference>
<dbReference type="GO" id="GO:0000122">
    <property type="term" value="P:negative regulation of transcription by RNA polymerase II"/>
    <property type="evidence" value="ECO:0007669"/>
    <property type="project" value="Ensembl"/>
</dbReference>
<dbReference type="GO" id="GO:0072134">
    <property type="term" value="P:nephrogenic mesenchyme morphogenesis"/>
    <property type="evidence" value="ECO:0007669"/>
    <property type="project" value="Ensembl"/>
</dbReference>
<dbReference type="GO" id="GO:0014033">
    <property type="term" value="P:neural crest cell differentiation"/>
    <property type="evidence" value="ECO:0007669"/>
    <property type="project" value="Ensembl"/>
</dbReference>
<dbReference type="GO" id="GO:0048665">
    <property type="term" value="P:neuron fate specification"/>
    <property type="evidence" value="ECO:0007669"/>
    <property type="project" value="Ensembl"/>
</dbReference>
<dbReference type="GO" id="GO:0003148">
    <property type="term" value="P:outflow tract septum morphogenesis"/>
    <property type="evidence" value="ECO:0007669"/>
    <property type="project" value="Ensembl"/>
</dbReference>
<dbReference type="GO" id="GO:0001541">
    <property type="term" value="P:ovarian follicle development"/>
    <property type="evidence" value="ECO:0007669"/>
    <property type="project" value="Ensembl"/>
</dbReference>
<dbReference type="GO" id="GO:0003251">
    <property type="term" value="P:positive regulation of cell proliferation involved in heart valve morphogenesis"/>
    <property type="evidence" value="ECO:0007669"/>
    <property type="project" value="Ensembl"/>
</dbReference>
<dbReference type="GO" id="GO:0010718">
    <property type="term" value="P:positive regulation of epithelial to mesenchymal transition"/>
    <property type="evidence" value="ECO:0007669"/>
    <property type="project" value="Ensembl"/>
</dbReference>
<dbReference type="GO" id="GO:1901203">
    <property type="term" value="P:positive regulation of extracellular matrix assembly"/>
    <property type="evidence" value="ECO:0007669"/>
    <property type="project" value="Ensembl"/>
</dbReference>
<dbReference type="GO" id="GO:0046881">
    <property type="term" value="P:positive regulation of follicle-stimulating hormone secretion"/>
    <property type="evidence" value="ECO:0007669"/>
    <property type="project" value="Ensembl"/>
</dbReference>
<dbReference type="GO" id="GO:0010628">
    <property type="term" value="P:positive regulation of gene expression"/>
    <property type="evidence" value="ECO:0007669"/>
    <property type="project" value="Ensembl"/>
</dbReference>
<dbReference type="GO" id="GO:0033686">
    <property type="term" value="P:positive regulation of luteinizing hormone secretion"/>
    <property type="evidence" value="ECO:0007669"/>
    <property type="project" value="Ensembl"/>
</dbReference>
<dbReference type="GO" id="GO:1902895">
    <property type="term" value="P:positive regulation of miRNA transcription"/>
    <property type="evidence" value="ECO:0007669"/>
    <property type="project" value="Ensembl"/>
</dbReference>
<dbReference type="GO" id="GO:0060391">
    <property type="term" value="P:positive regulation of SMAD protein signal transduction"/>
    <property type="evidence" value="ECO:0007669"/>
    <property type="project" value="Ensembl"/>
</dbReference>
<dbReference type="GO" id="GO:0030511">
    <property type="term" value="P:positive regulation of transforming growth factor beta receptor signaling pathway"/>
    <property type="evidence" value="ECO:0007669"/>
    <property type="project" value="Ensembl"/>
</dbReference>
<dbReference type="GO" id="GO:0051797">
    <property type="term" value="P:regulation of hair follicle development"/>
    <property type="evidence" value="ECO:0007669"/>
    <property type="project" value="Ensembl"/>
</dbReference>
<dbReference type="GO" id="GO:0006357">
    <property type="term" value="P:regulation of transcription by RNA polymerase II"/>
    <property type="evidence" value="ECO:0000318"/>
    <property type="project" value="GO_Central"/>
</dbReference>
<dbReference type="GO" id="GO:0032909">
    <property type="term" value="P:regulation of transforming growth factor beta2 production"/>
    <property type="evidence" value="ECO:0007669"/>
    <property type="project" value="Ensembl"/>
</dbReference>
<dbReference type="GO" id="GO:0001666">
    <property type="term" value="P:response to hypoxia"/>
    <property type="evidence" value="ECO:0007669"/>
    <property type="project" value="Ensembl"/>
</dbReference>
<dbReference type="GO" id="GO:0048733">
    <property type="term" value="P:sebaceous gland development"/>
    <property type="evidence" value="ECO:0007669"/>
    <property type="project" value="Ensembl"/>
</dbReference>
<dbReference type="GO" id="GO:0062009">
    <property type="term" value="P:secondary palate development"/>
    <property type="evidence" value="ECO:0007669"/>
    <property type="project" value="Ensembl"/>
</dbReference>
<dbReference type="GO" id="GO:0072520">
    <property type="term" value="P:seminiferous tubule development"/>
    <property type="evidence" value="ECO:0007669"/>
    <property type="project" value="Ensembl"/>
</dbReference>
<dbReference type="GO" id="GO:0007338">
    <property type="term" value="P:single fertilization"/>
    <property type="evidence" value="ECO:0007669"/>
    <property type="project" value="Ensembl"/>
</dbReference>
<dbReference type="GO" id="GO:0060395">
    <property type="term" value="P:SMAD protein signal transduction"/>
    <property type="evidence" value="ECO:0000318"/>
    <property type="project" value="GO_Central"/>
</dbReference>
<dbReference type="GO" id="GO:0032525">
    <property type="term" value="P:somite rostral/caudal axis specification"/>
    <property type="evidence" value="ECO:0007669"/>
    <property type="project" value="Ensembl"/>
</dbReference>
<dbReference type="GO" id="GO:0007283">
    <property type="term" value="P:spermatogenesis"/>
    <property type="evidence" value="ECO:0007669"/>
    <property type="project" value="Ensembl"/>
</dbReference>
<dbReference type="GO" id="GO:0006366">
    <property type="term" value="P:transcription by RNA polymerase II"/>
    <property type="evidence" value="ECO:0007669"/>
    <property type="project" value="Ensembl"/>
</dbReference>
<dbReference type="GO" id="GO:0007179">
    <property type="term" value="P:transforming growth factor beta receptor signaling pathway"/>
    <property type="evidence" value="ECO:0000318"/>
    <property type="project" value="GO_Central"/>
</dbReference>
<dbReference type="GO" id="GO:0060065">
    <property type="term" value="P:uterus development"/>
    <property type="evidence" value="ECO:0007669"/>
    <property type="project" value="Ensembl"/>
</dbReference>
<dbReference type="GO" id="GO:0060412">
    <property type="term" value="P:ventricular septum morphogenesis"/>
    <property type="evidence" value="ECO:0007669"/>
    <property type="project" value="Ensembl"/>
</dbReference>
<dbReference type="CDD" id="cd10492">
    <property type="entry name" value="MH1_SMAD_4"/>
    <property type="match status" value="1"/>
</dbReference>
<dbReference type="CDD" id="cd10498">
    <property type="entry name" value="MH2_SMAD_4"/>
    <property type="match status" value="1"/>
</dbReference>
<dbReference type="FunFam" id="2.60.200.10:FF:000002">
    <property type="entry name" value="Mothers against decapentaplegic homolog"/>
    <property type="match status" value="1"/>
</dbReference>
<dbReference type="FunFam" id="3.90.520.10:FF:000002">
    <property type="entry name" value="Mothers against decapentaplegic homolog"/>
    <property type="match status" value="1"/>
</dbReference>
<dbReference type="Gene3D" id="2.60.200.10">
    <property type="match status" value="1"/>
</dbReference>
<dbReference type="Gene3D" id="3.90.520.10">
    <property type="entry name" value="SMAD MH1 domain"/>
    <property type="match status" value="1"/>
</dbReference>
<dbReference type="InterPro" id="IPR013790">
    <property type="entry name" value="Dwarfin"/>
</dbReference>
<dbReference type="InterPro" id="IPR003619">
    <property type="entry name" value="MAD_homology1_Dwarfin-type"/>
</dbReference>
<dbReference type="InterPro" id="IPR013019">
    <property type="entry name" value="MAD_homology_MH1"/>
</dbReference>
<dbReference type="InterPro" id="IPR017855">
    <property type="entry name" value="SMAD-like_dom_sf"/>
</dbReference>
<dbReference type="InterPro" id="IPR001132">
    <property type="entry name" value="SMAD_dom_Dwarfin-type"/>
</dbReference>
<dbReference type="InterPro" id="IPR008984">
    <property type="entry name" value="SMAD_FHA_dom_sf"/>
</dbReference>
<dbReference type="InterPro" id="IPR036578">
    <property type="entry name" value="SMAD_MH1_sf"/>
</dbReference>
<dbReference type="PANTHER" id="PTHR13703:SF63">
    <property type="entry name" value="MOTHERS AGAINST DECAPENTAPLEGIC HOMOLOG 4"/>
    <property type="match status" value="1"/>
</dbReference>
<dbReference type="PANTHER" id="PTHR13703">
    <property type="entry name" value="SMAD"/>
    <property type="match status" value="1"/>
</dbReference>
<dbReference type="Pfam" id="PF03165">
    <property type="entry name" value="MH1"/>
    <property type="match status" value="1"/>
</dbReference>
<dbReference type="Pfam" id="PF03166">
    <property type="entry name" value="MH2"/>
    <property type="match status" value="1"/>
</dbReference>
<dbReference type="SMART" id="SM00523">
    <property type="entry name" value="DWA"/>
    <property type="match status" value="1"/>
</dbReference>
<dbReference type="SMART" id="SM00524">
    <property type="entry name" value="DWB"/>
    <property type="match status" value="1"/>
</dbReference>
<dbReference type="SUPFAM" id="SSF56366">
    <property type="entry name" value="SMAD MH1 domain"/>
    <property type="match status" value="1"/>
</dbReference>
<dbReference type="SUPFAM" id="SSF49879">
    <property type="entry name" value="SMAD/FHA domain"/>
    <property type="match status" value="1"/>
</dbReference>
<dbReference type="PROSITE" id="PS51075">
    <property type="entry name" value="MH1"/>
    <property type="match status" value="1"/>
</dbReference>
<dbReference type="PROSITE" id="PS51076">
    <property type="entry name" value="MH2"/>
    <property type="match status" value="1"/>
</dbReference>
<feature type="chain" id="PRO_0000090863" description="Mothers against decapentaplegic homolog 4">
    <location>
        <begin position="1"/>
        <end position="552"/>
    </location>
</feature>
<feature type="domain" description="MH1" evidence="5">
    <location>
        <begin position="18"/>
        <end position="142"/>
    </location>
</feature>
<feature type="domain" description="MH2" evidence="6">
    <location>
        <begin position="323"/>
        <end position="552"/>
    </location>
</feature>
<feature type="region of interest" description="Mediates interaction with ZBTB7A" evidence="4">
    <location>
        <begin position="1"/>
        <end position="322"/>
    </location>
</feature>
<feature type="region of interest" description="Required for interaction with TSC22D1" evidence="4">
    <location>
        <begin position="44"/>
        <end position="69"/>
    </location>
</feature>
<feature type="region of interest" description="Disordered" evidence="7">
    <location>
        <begin position="264"/>
        <end position="297"/>
    </location>
</feature>
<feature type="region of interest" description="SAD">
    <location>
        <begin position="275"/>
        <end position="320"/>
    </location>
</feature>
<feature type="binding site" evidence="1">
    <location>
        <position position="71"/>
    </location>
    <ligand>
        <name>Zn(2+)</name>
        <dbReference type="ChEBI" id="CHEBI:29105"/>
    </ligand>
</feature>
<feature type="binding site" evidence="1">
    <location>
        <position position="115"/>
    </location>
    <ligand>
        <name>Zn(2+)</name>
        <dbReference type="ChEBI" id="CHEBI:29105"/>
    </ligand>
</feature>
<feature type="binding site" evidence="1">
    <location>
        <position position="127"/>
    </location>
    <ligand>
        <name>Zn(2+)</name>
        <dbReference type="ChEBI" id="CHEBI:29105"/>
    </ligand>
</feature>
<feature type="binding site" evidence="1">
    <location>
        <position position="132"/>
    </location>
    <ligand>
        <name>Zn(2+)</name>
        <dbReference type="ChEBI" id="CHEBI:29105"/>
    </ligand>
</feature>
<feature type="site" description="Necessary for heterotrimerization" evidence="1">
    <location>
        <position position="515"/>
    </location>
</feature>
<feature type="modified residue" description="N6-acetyllysine" evidence="4">
    <location>
        <position position="37"/>
    </location>
</feature>
<feature type="modified residue" description="N6-acetyllysine" evidence="4">
    <location>
        <position position="428"/>
    </location>
</feature>
<feature type="modified residue" description="N6-acetyllysine" evidence="4">
    <location>
        <position position="507"/>
    </location>
</feature>
<feature type="cross-link" description="Glycyl lysine isopeptide (Lys-Gly) (interchain with G-Cter in SUMO2)" evidence="4">
    <location>
        <position position="113"/>
    </location>
</feature>
<feature type="cross-link" description="Glycyl lysine isopeptide (Lys-Gly) (interchain with G-Cter in ubiquitin)" evidence="4">
    <location>
        <position position="519"/>
    </location>
</feature>
<reference key="1">
    <citation type="submission" date="2001-01" db="EMBL/GenBank/DDBJ databases">
        <authorList>
            <person name="Ito Y."/>
            <person name="Awata T."/>
        </authorList>
    </citation>
    <scope>NUCLEOTIDE SEQUENCE [MRNA]</scope>
    <source>
        <tissue>Muscle</tissue>
    </source>
</reference>
<organism>
    <name type="scientific">Sus scrofa</name>
    <name type="common">Pig</name>
    <dbReference type="NCBI Taxonomy" id="9823"/>
    <lineage>
        <taxon>Eukaryota</taxon>
        <taxon>Metazoa</taxon>
        <taxon>Chordata</taxon>
        <taxon>Craniata</taxon>
        <taxon>Vertebrata</taxon>
        <taxon>Euteleostomi</taxon>
        <taxon>Mammalia</taxon>
        <taxon>Eutheria</taxon>
        <taxon>Laurasiatheria</taxon>
        <taxon>Artiodactyla</taxon>
        <taxon>Suina</taxon>
        <taxon>Suidae</taxon>
        <taxon>Sus</taxon>
    </lineage>
</organism>
<accession>Q9GKQ9</accession>
<comment type="function">
    <text evidence="1">Common SMAD (co-SMAD) is the coactivator and mediator of signal transduction by TGF-beta (transforming growth factor). Component of the heterotrimeric SMAD2/SMAD3-SMAD4 complex that forms in the nucleus and is required for the TGF-mediated signaling. Promotes binding of the SMAD2/SMAD4/FAST-1 complex to DNA and provides an activation function required for SMAD1 or SMAD2 to stimulate transcription. Component of the multimeric SMAD3/SMAD4/JUN/FOS complex which forms at the AP1 promoter site; required for synergistic transcriptional activity in response to TGF-beta. Acts synergistically with SMAD1 and YY1 in bone morphogenetic protein (BMP)-mediated cardiac-specific gene expression. Binds to SMAD binding elements (SBEs) (5'-GTCT/AGAC-3') within BMP response element (BMPRE) of cardiac activating regions. May act as a tumor suppressor. Positively regulates PDPK1 kinase activity by stimulating its dissociation from the 14-3-3 protein YWHAQ which acts as a negative regulator (By similarity). In muscle physiology, plays a central role in the balance between atrophy and hypertrophy. When recruited by MSTN, promotes atrophy response via phosphorylated SMAD2/4. MSTN decrease causes SMAD4 release and subsequent recruitment by the BMP pathway to promote hypertrophy via phosphorylated SMAD1/5/8 (By similarity).</text>
</comment>
<comment type="subunit">
    <text evidence="2 3 4">Monomer; in the absence of TGF-beta activation (By similarity). Heterotrimer; on TGF-beta activation (By similarity). Heterotrimer composed of two molecules of a C-terminally phosphorylated R-SMAD molecule, SMAD2 or SMAD3, and one molecule of SMAD4 to form the transcriptional active SMAD2/SMAD3-SMAD4 complex (By similarity). Found in a ternary complex composed of SMAD4, STK11/LKB1 and STK11IP. Found in a complex with SMAD1 and YY1. Identified in a complex that contains at least ZNF451, SMAD2, SMAD3 and SMAD4. Interacts with ATF2, COPS5, DACH1, MSG1, SKI, STK11/LKB1, STK11IP and TRIM33. Associates with ZNF423 or ZNF521 in response to BMP2 leading to activate transcription of BMP target genes. Interacts with USP9X. Interacts with RBPMS. Interacts with WWTR1 (via coiled-coil domain). Interacts with CITED1 and CITED2. Interacts with PDPK1 (via PH domain). Interacts with VPS39; this interaction affects heterodimer formation with SMAD3, but not with SMAD2, and leads to inhibition of SMAD3-dependent transcription activation. Interactions with VPS39 and SMAD2 may be mutually exclusive. Interacts (via MH2 domain) with ZNF451 (via N-terminal zinc-finger domains) (By similarity). Interacts with ZC3H3. Interacts weakly with ZNF8. Interacts with NUP93 and IPO7; translocates SMAD4 to the nucleus through the NPC upon BMP7 stimulation resulting in activation of SMAD4 signaling (By similarity). Interacts with CREB3L1, the interaction takes place upon TGFB1 induction and SMAD4 acts as a CREB3L1 coactivator to induce the expression of genes involved in the assembly of collagen extracellular matrix (By similarity). Interacts with DLX1 (By similarity). Interacts with ZBTB7A; the interaction is direct and stimulated by TGFB1 (By similarity). Interacts with CREBBP; the recruitment of this transcriptional coactivator is negatively regulated by ZBTB7A (By similarity). Interacts with EP300; the interaction with this transcriptional coactivator is negatively regulated by ZBTB7A (By similarity). Interacts with HDAC1 (By similarity). Interacts (via MH2 domain) with ZMIZ1 (via SP-RING-type domain); in the TGF-beta signaling pathway increases the activity of the SMAD3/SMAD4 transcriptional complex (By similarity). Interacts (via N-terminus) with TSC22D1 (By similarity).</text>
</comment>
<comment type="subcellular location">
    <subcellularLocation>
        <location evidence="4">Cytoplasm</location>
    </subcellularLocation>
    <subcellularLocation>
        <location evidence="4">Nucleus</location>
    </subcellularLocation>
    <text evidence="4">In the cytoplasm in the absence of ligand. Migration to the nucleus when complexed with R-SMAD. PDPK1 prevents its nuclear translocation.</text>
</comment>
<comment type="domain">
    <text evidence="1">The MH1 domain is required for DNA binding.</text>
</comment>
<comment type="domain">
    <text evidence="1">The MH2 domain is required for both homomeric and heteromeric interactions and for transcriptional regulation. Sufficient for nuclear import (By similarity).</text>
</comment>
<comment type="PTM">
    <text evidence="1">Phosphorylated by PDPK1.</text>
</comment>
<comment type="PTM">
    <text evidence="1">Monoubiquitinated on Lys-519 by E3 ubiquitin-protein ligase TRIM33. Monoubiquitination hampers its ability to form a stable complex with activated SMAD2/3 resulting in inhibition of TGF-beta/BMP signaling cascade. Deubiquitination by USP9X restores its competence to mediate TGF-beta signaling (By similarity).</text>
</comment>
<comment type="similarity">
    <text evidence="8">Belongs to the dwarfin/SMAD family.</text>
</comment>
<name>SMAD4_PIG</name>
<protein>
    <recommendedName>
        <fullName>Mothers against decapentaplegic homolog 4</fullName>
        <shortName>MAD homolog 4</shortName>
        <shortName>Mothers against DPP homolog 4</shortName>
    </recommendedName>
    <alternativeName>
        <fullName>SMAD family member 4</fullName>
        <shortName>SMAD 4</shortName>
        <shortName>Smad4</shortName>
    </alternativeName>
</protein>
<sequence>MDNMSITNTPTSNDACLSIVHSLMCHRQGGESETFAKRAIESLVKKLKEKKDELDSLITAITTNGAHPSKCVTIQRTLDGRLQVAGRKGFPHVIYARLWRWPDLHKNELKHVKYCQYAFDLKCDSVCVNPYHYERVVSPGIDLSGLTLQSNAPSGMLVKDEYVHDFEGQPSLATEGHSIQTIQHPPSNRASTETYSTPALLAPSESNATSTTNFPNIPVASTSQPASILAGSHSEGLLQIASGPQPGQQQNGFTGQPATYHHNSTTTWTGSRTAPYPPNLPHHQNGHLQHHPPMPPHPGHYWPVHNELAFQPPISNHPAPEYWCSIAYFEMDVQVGETFKVPSSCPIVTVDGYVDPSGGDRFCLGQLSNVHRTEAIERARLHIGKGVQLECKGEGDVWVRCLSDHAVFVQSYYLDREAGRAPGDAVHKIYPSAYIKVFDLRQCHRQMQQQAATAQAAAAAQAAAVAGNIPGPGSVGGIAPAISLSAAAGIGVDDLRRLCILRMSFVKGWGPDYPRQSIKETPCWIEIHLHRALQLLDEVLHTMPIADPQPLD</sequence>
<keyword id="KW-0007">Acetylation</keyword>
<keyword id="KW-0963">Cytoplasm</keyword>
<keyword id="KW-0238">DNA-binding</keyword>
<keyword id="KW-1017">Isopeptide bond</keyword>
<keyword id="KW-0479">Metal-binding</keyword>
<keyword id="KW-0539">Nucleus</keyword>
<keyword id="KW-1185">Reference proteome</keyword>
<keyword id="KW-0804">Transcription</keyword>
<keyword id="KW-0805">Transcription regulation</keyword>
<keyword id="KW-0832">Ubl conjugation</keyword>
<keyword id="KW-0862">Zinc</keyword>
<proteinExistence type="evidence at transcript level"/>
<evidence type="ECO:0000250" key="1"/>
<evidence type="ECO:0000250" key="2">
    <source>
        <dbReference type="UniProtKB" id="O70437"/>
    </source>
</evidence>
<evidence type="ECO:0000250" key="3">
    <source>
        <dbReference type="UniProtKB" id="P97471"/>
    </source>
</evidence>
<evidence type="ECO:0000250" key="4">
    <source>
        <dbReference type="UniProtKB" id="Q13485"/>
    </source>
</evidence>
<evidence type="ECO:0000255" key="5">
    <source>
        <dbReference type="PROSITE-ProRule" id="PRU00438"/>
    </source>
</evidence>
<evidence type="ECO:0000255" key="6">
    <source>
        <dbReference type="PROSITE-ProRule" id="PRU00439"/>
    </source>
</evidence>
<evidence type="ECO:0000256" key="7">
    <source>
        <dbReference type="SAM" id="MobiDB-lite"/>
    </source>
</evidence>
<evidence type="ECO:0000305" key="8"/>
<gene>
    <name type="primary">SMAD4</name>
    <name type="synonym">MADH4</name>
</gene>